<comment type="function">
    <text evidence="1 4">Exhibits a lower single conductance but no spontaneous channel activity (By similarity). May function as a regulator of calcium channels or a channel component involving Ca2(+) homeostasis (PubMed:20043191).</text>
</comment>
<comment type="subunit">
    <text evidence="1">Interacts with TRPC1 and TRPC5.</text>
</comment>
<comment type="subcellular location">
    <subcellularLocation>
        <location evidence="4">Membrane</location>
        <topology evidence="2">Multi-pass membrane protein</topology>
    </subcellularLocation>
</comment>
<comment type="tissue specificity">
    <text evidence="3">Expressed only in testis and heart.</text>
</comment>
<comment type="similarity">
    <text evidence="5">Belongs to the polycystin family.</text>
</comment>
<gene>
    <name evidence="6" type="primary">Pkd2l2</name>
</gene>
<sequence length="621" mass="73683">MSEATWWYRGGTSKHDLHYRREAEVNTTLEELLLYFIFLINLCILTFGMVNPHMYYLNKVMSSLFVDTSLPDDERSSFRSIRSITEFWKFMEGPLIDGLYWDSWYGNKQLYSVKNSSRIYYENVLLGIPRVRQLRVRNNTCKVYPAFQSLVSDCYSKYTVENEDFSDFGLKRNPEWTHTPSSRTAPWHWGFVGVYRDGGYIVTLSKSKSETKAKFVDLRLNNWISRGTRAVFIDFSLYNANVNLFCIIRLLAEFPATGGLLTSWQFYSVKLLRYVSYYDYFIASCEVIFCIFLFVFIIQELRKVNEFKSAYFRSVWNWLEMLLLLLCFLAVSFYAYCNMQSFLLLGQLLKNTDSYPDFYFLAYWHIYYNNVIAITIFFAWIKIFKFISFNETMSQLSSTLSRCMKDIVGFAIMFFIIFSAYAQLGFLVFGSQVDDFSTFQNSIFAQFRIVLGDFNFAGIQQANWILGPIYFITFIFFVFFVLLNMFLAIINDTYSEVKADYSIGRRPDFELGKIIQKSCFNVLEKLRLKKAQAKEEKKMQTTDLAQRARRDGFDESEIQEAEQMKRWKERLEKKYYSTEIQDDYQPVTQQEFRELFLYAVELEKELHYVSLKLNQLMRKLH</sequence>
<keyword id="KW-0175">Coiled coil</keyword>
<keyword id="KW-0325">Glycoprotein</keyword>
<keyword id="KW-0407">Ion channel</keyword>
<keyword id="KW-0406">Ion transport</keyword>
<keyword id="KW-0472">Membrane</keyword>
<keyword id="KW-1185">Reference proteome</keyword>
<keyword id="KW-0812">Transmembrane</keyword>
<keyword id="KW-1133">Transmembrane helix</keyword>
<keyword id="KW-0813">Transport</keyword>
<accession>Q9JLG4</accession>
<accession>B2RS50</accession>
<feature type="chain" id="PRO_0000164362" description="Polycystin-2-like protein 2">
    <location>
        <begin position="1"/>
        <end position="621"/>
    </location>
</feature>
<feature type="topological domain" description="Cytoplasmic" evidence="2">
    <location>
        <begin position="1"/>
        <end position="31"/>
    </location>
</feature>
<feature type="transmembrane region" description="Helical" evidence="2">
    <location>
        <begin position="32"/>
        <end position="52"/>
    </location>
</feature>
<feature type="topological domain" description="Extracellular" evidence="2">
    <location>
        <begin position="53"/>
        <end position="277"/>
    </location>
</feature>
<feature type="transmembrane region" description="Helical" evidence="2">
    <location>
        <begin position="278"/>
        <end position="298"/>
    </location>
</feature>
<feature type="topological domain" description="Cytoplasmic" evidence="2">
    <location>
        <begin position="299"/>
        <end position="314"/>
    </location>
</feature>
<feature type="transmembrane region" description="Helical" evidence="2">
    <location>
        <begin position="315"/>
        <end position="335"/>
    </location>
</feature>
<feature type="topological domain" description="Extracellular" evidence="2">
    <location>
        <begin position="336"/>
        <end position="360"/>
    </location>
</feature>
<feature type="transmembrane region" description="Helical" evidence="2">
    <location>
        <begin position="361"/>
        <end position="381"/>
    </location>
</feature>
<feature type="topological domain" description="Cytoplasmic" evidence="2">
    <location>
        <begin position="382"/>
        <end position="406"/>
    </location>
</feature>
<feature type="transmembrane region" description="Helical" evidence="2">
    <location>
        <begin position="407"/>
        <end position="427"/>
    </location>
</feature>
<feature type="topological domain" description="Extracellular" evidence="2">
    <location>
        <begin position="428"/>
        <end position="468"/>
    </location>
</feature>
<feature type="transmembrane region" description="Helical" evidence="2">
    <location>
        <begin position="469"/>
        <end position="489"/>
    </location>
</feature>
<feature type="topological domain" description="Cytoplasmic" evidence="2">
    <location>
        <begin position="490"/>
        <end position="621"/>
    </location>
</feature>
<feature type="coiled-coil region" evidence="2">
    <location>
        <begin position="521"/>
        <end position="551"/>
    </location>
</feature>
<feature type="glycosylation site" description="N-linked (GlcNAc...) asparagine" evidence="2">
    <location>
        <position position="115"/>
    </location>
</feature>
<feature type="glycosylation site" description="N-linked (GlcNAc...) asparagine" evidence="2">
    <location>
        <position position="138"/>
    </location>
</feature>
<feature type="sequence conflict" description="In Ref. 1; AAF65621." evidence="5" ref="1">
    <original>N</original>
    <variation>T</variation>
    <location>
        <position position="107"/>
    </location>
</feature>
<feature type="sequence conflict" description="In Ref. 1; AAF65621." evidence="5" ref="1">
    <original>D</original>
    <variation>E</variation>
    <location>
        <position position="551"/>
    </location>
</feature>
<organism>
    <name type="scientific">Mus musculus</name>
    <name type="common">Mouse</name>
    <dbReference type="NCBI Taxonomy" id="10090"/>
    <lineage>
        <taxon>Eukaryota</taxon>
        <taxon>Metazoa</taxon>
        <taxon>Chordata</taxon>
        <taxon>Craniata</taxon>
        <taxon>Vertebrata</taxon>
        <taxon>Euteleostomi</taxon>
        <taxon>Mammalia</taxon>
        <taxon>Eutheria</taxon>
        <taxon>Euarchontoglires</taxon>
        <taxon>Glires</taxon>
        <taxon>Rodentia</taxon>
        <taxon>Myomorpha</taxon>
        <taxon>Muroidea</taxon>
        <taxon>Muridae</taxon>
        <taxon>Murinae</taxon>
        <taxon>Mus</taxon>
        <taxon>Mus</taxon>
    </lineage>
</organism>
<name>PK2L2_MOUSE</name>
<proteinExistence type="evidence at transcript level"/>
<evidence type="ECO:0000250" key="1">
    <source>
        <dbReference type="UniProtKB" id="Q9NZM6"/>
    </source>
</evidence>
<evidence type="ECO:0000255" key="2"/>
<evidence type="ECO:0000269" key="3">
    <source>
    </source>
</evidence>
<evidence type="ECO:0000269" key="4">
    <source>
    </source>
</evidence>
<evidence type="ECO:0000305" key="5"/>
<evidence type="ECO:0000312" key="6">
    <source>
        <dbReference type="MGI" id="MGI:1858231"/>
    </source>
</evidence>
<reference key="1">
    <citation type="journal article" date="2000" name="Genomics">
        <title>Identification and characterization of a novel polycystin family member, polycystin-L2, in mouse and human: sequence, expression, alternative splicing, and chromosomal localization.</title>
        <authorList>
            <person name="Guo L."/>
            <person name="Schreiber T.H."/>
            <person name="Weremowicz S."/>
            <person name="Morton C.C."/>
            <person name="Lee C."/>
            <person name="Zhou J."/>
        </authorList>
    </citation>
    <scope>NUCLEOTIDE SEQUENCE [MRNA]</scope>
    <scope>TISSUE SPECIFICITY</scope>
    <source>
        <tissue>Testis</tissue>
    </source>
</reference>
<reference key="2">
    <citation type="journal article" date="2004" name="Genome Res.">
        <title>The status, quality, and expansion of the NIH full-length cDNA project: the Mammalian Gene Collection (MGC).</title>
        <authorList>
            <consortium name="The MGC Project Team"/>
        </authorList>
    </citation>
    <scope>NUCLEOTIDE SEQUENCE [LARGE SCALE MRNA]</scope>
    <source>
        <tissue>Brain</tissue>
    </source>
</reference>
<reference key="3">
    <citation type="journal article" date="2010" name="Mol. Cell. Biochem.">
        <title>Overexpression of Trpp5 contributes to cell proliferation and apoptosis probably through involving calcium homeostasis.</title>
        <authorList>
            <person name="Xiao Y."/>
            <person name="Lv X."/>
            <person name="Cao G."/>
            <person name="Bian G."/>
            <person name="Duan J."/>
            <person name="Ai J."/>
            <person name="Sun H."/>
            <person name="Li Q."/>
            <person name="Yang Q."/>
            <person name="Chen T."/>
            <person name="Zhao D."/>
            <person name="Tan R."/>
            <person name="Liu Y."/>
            <person name="Wang Y."/>
            <person name="Zhang Z."/>
            <person name="Yang Y."/>
            <person name="Wei Y."/>
            <person name="Zhou Q."/>
        </authorList>
    </citation>
    <scope>FUNCTION</scope>
    <scope>SUBCELLULAR LOCATION</scope>
</reference>
<dbReference type="EMBL" id="AF182033">
    <property type="protein sequence ID" value="AAF65621.1"/>
    <property type="molecule type" value="mRNA"/>
</dbReference>
<dbReference type="EMBL" id="BC138717">
    <property type="protein sequence ID" value="AAI38718.1"/>
    <property type="molecule type" value="mRNA"/>
</dbReference>
<dbReference type="CCDS" id="CCDS29127.1"/>
<dbReference type="RefSeq" id="NP_001156476.1">
    <property type="nucleotide sequence ID" value="NM_001163004.1"/>
</dbReference>
<dbReference type="RefSeq" id="NP_058623.2">
    <property type="nucleotide sequence ID" value="NM_016927.3"/>
</dbReference>
<dbReference type="RefSeq" id="XP_017173434.1">
    <property type="nucleotide sequence ID" value="XM_017317945.1"/>
</dbReference>
<dbReference type="SMR" id="Q9JLG4"/>
<dbReference type="FunCoup" id="Q9JLG4">
    <property type="interactions" value="131"/>
</dbReference>
<dbReference type="STRING" id="10090.ENSMUSP00000014647"/>
<dbReference type="GlyCosmos" id="Q9JLG4">
    <property type="glycosylation" value="2 sites, No reported glycans"/>
</dbReference>
<dbReference type="GlyGen" id="Q9JLG4">
    <property type="glycosylation" value="2 sites"/>
</dbReference>
<dbReference type="PhosphoSitePlus" id="Q9JLG4"/>
<dbReference type="PaxDb" id="10090-ENSMUSP00000014647"/>
<dbReference type="ProteomicsDB" id="288176"/>
<dbReference type="Antibodypedia" id="26539">
    <property type="antibodies" value="98 antibodies from 17 providers"/>
</dbReference>
<dbReference type="DNASU" id="53871"/>
<dbReference type="Ensembl" id="ENSMUST00000014647.9">
    <property type="protein sequence ID" value="ENSMUSP00000014647.8"/>
    <property type="gene ID" value="ENSMUSG00000014503.16"/>
</dbReference>
<dbReference type="Ensembl" id="ENSMUST00000166156.9">
    <property type="protein sequence ID" value="ENSMUSP00000127257.2"/>
    <property type="gene ID" value="ENSMUSG00000014503.16"/>
</dbReference>
<dbReference type="GeneID" id="53871"/>
<dbReference type="KEGG" id="mmu:53871"/>
<dbReference type="UCSC" id="uc008ekm.2">
    <property type="organism name" value="mouse"/>
</dbReference>
<dbReference type="AGR" id="MGI:1858231"/>
<dbReference type="CTD" id="27039"/>
<dbReference type="MGI" id="MGI:1858231">
    <property type="gene designation" value="Pkd2l2"/>
</dbReference>
<dbReference type="VEuPathDB" id="HostDB:ENSMUSG00000014503"/>
<dbReference type="eggNOG" id="KOG3599">
    <property type="taxonomic scope" value="Eukaryota"/>
</dbReference>
<dbReference type="GeneTree" id="ENSGT00940000161122"/>
<dbReference type="HOGENOM" id="CLU_012097_1_2_1"/>
<dbReference type="InParanoid" id="Q9JLG4"/>
<dbReference type="OMA" id="MVDFWKF"/>
<dbReference type="OrthoDB" id="444119at2759"/>
<dbReference type="PhylomeDB" id="Q9JLG4"/>
<dbReference type="TreeFam" id="TF316484"/>
<dbReference type="BioGRID-ORCS" id="53871">
    <property type="hits" value="0 hits in 77 CRISPR screens"/>
</dbReference>
<dbReference type="CD-CODE" id="01CA17F3">
    <property type="entry name" value="Centrosome"/>
</dbReference>
<dbReference type="ChiTaRS" id="Pkd2l2">
    <property type="organism name" value="mouse"/>
</dbReference>
<dbReference type="PRO" id="PR:Q9JLG4"/>
<dbReference type="Proteomes" id="UP000000589">
    <property type="component" value="Chromosome 18"/>
</dbReference>
<dbReference type="RNAct" id="Q9JLG4">
    <property type="molecule type" value="protein"/>
</dbReference>
<dbReference type="Bgee" id="ENSMUSG00000014503">
    <property type="expression patterns" value="Expressed in animal zygote and 98 other cell types or tissues"/>
</dbReference>
<dbReference type="GO" id="GO:0016020">
    <property type="term" value="C:membrane"/>
    <property type="evidence" value="ECO:0007669"/>
    <property type="project" value="UniProtKB-SubCell"/>
</dbReference>
<dbReference type="GO" id="GO:0005509">
    <property type="term" value="F:calcium ion binding"/>
    <property type="evidence" value="ECO:0007669"/>
    <property type="project" value="InterPro"/>
</dbReference>
<dbReference type="GO" id="GO:0034220">
    <property type="term" value="P:monoatomic ion transmembrane transport"/>
    <property type="evidence" value="ECO:0007669"/>
    <property type="project" value="UniProtKB-KW"/>
</dbReference>
<dbReference type="FunFam" id="1.10.287.70:FF:000096">
    <property type="entry name" value="polycystic kidney disease 2-like 2 protein isoform X2"/>
    <property type="match status" value="1"/>
</dbReference>
<dbReference type="Gene3D" id="1.10.287.70">
    <property type="match status" value="1"/>
</dbReference>
<dbReference type="InterPro" id="IPR013122">
    <property type="entry name" value="PKD1_2_channel"/>
</dbReference>
<dbReference type="InterPro" id="IPR003915">
    <property type="entry name" value="PKD_2"/>
</dbReference>
<dbReference type="InterPro" id="IPR051223">
    <property type="entry name" value="Polycystin"/>
</dbReference>
<dbReference type="InterPro" id="IPR046791">
    <property type="entry name" value="Polycystin_dom"/>
</dbReference>
<dbReference type="PANTHER" id="PTHR10877">
    <property type="entry name" value="POLYCYSTIN FAMILY MEMBER"/>
    <property type="match status" value="1"/>
</dbReference>
<dbReference type="PANTHER" id="PTHR10877:SF47">
    <property type="entry name" value="POLYCYSTIN-2-LIKE PROTEIN 2"/>
    <property type="match status" value="1"/>
</dbReference>
<dbReference type="Pfam" id="PF08016">
    <property type="entry name" value="PKD_channel"/>
    <property type="match status" value="1"/>
</dbReference>
<dbReference type="Pfam" id="PF20519">
    <property type="entry name" value="Polycystin_dom"/>
    <property type="match status" value="1"/>
</dbReference>
<dbReference type="PRINTS" id="PR01433">
    <property type="entry name" value="POLYCYSTIN2"/>
</dbReference>
<protein>
    <recommendedName>
        <fullName evidence="5">Polycystin-2-like protein 2</fullName>
        <shortName>Polycystin-2L2</shortName>
    </recommendedName>
    <alternativeName>
        <fullName>Polycystic kidney disease 2-like 2 protein</fullName>
    </alternativeName>
    <alternativeName>
        <fullName>Polycystin-L2</fullName>
    </alternativeName>
</protein>